<keyword id="KW-0067">ATP-binding</keyword>
<keyword id="KW-0143">Chaperone</keyword>
<keyword id="KW-0547">Nucleotide-binding</keyword>
<keyword id="KW-0597">Phosphoprotein</keyword>
<keyword id="KW-1185">Reference proteome</keyword>
<keyword id="KW-0346">Stress response</keyword>
<reference key="1">
    <citation type="journal article" date="2011" name="Stand. Genomic Sci.">
        <title>Complete genome sequence of Rhodospirillum rubrum type strain (S1).</title>
        <authorList>
            <person name="Munk A.C."/>
            <person name="Copeland A."/>
            <person name="Lucas S."/>
            <person name="Lapidus A."/>
            <person name="Del Rio T.G."/>
            <person name="Barry K."/>
            <person name="Detter J.C."/>
            <person name="Hammon N."/>
            <person name="Israni S."/>
            <person name="Pitluck S."/>
            <person name="Brettin T."/>
            <person name="Bruce D."/>
            <person name="Han C."/>
            <person name="Tapia R."/>
            <person name="Gilna P."/>
            <person name="Schmutz J."/>
            <person name="Larimer F."/>
            <person name="Land M."/>
            <person name="Kyrpides N.C."/>
            <person name="Mavromatis K."/>
            <person name="Richardson P."/>
            <person name="Rohde M."/>
            <person name="Goeker M."/>
            <person name="Klenk H.P."/>
            <person name="Zhang Y."/>
            <person name="Roberts G.P."/>
            <person name="Reslewic S."/>
            <person name="Schwartz D.C."/>
        </authorList>
    </citation>
    <scope>NUCLEOTIDE SEQUENCE [LARGE SCALE GENOMIC DNA]</scope>
    <source>
        <strain>ATCC 11170 / ATH 1.1.1 / DSM 467 / LMG 4362 / NCIMB 8255 / S1</strain>
    </source>
</reference>
<feature type="chain" id="PRO_1000059647" description="Chaperone protein DnaK">
    <location>
        <begin position="1"/>
        <end position="639"/>
    </location>
</feature>
<feature type="region of interest" description="Disordered" evidence="2">
    <location>
        <begin position="597"/>
        <end position="639"/>
    </location>
</feature>
<feature type="compositionally biased region" description="Low complexity" evidence="2">
    <location>
        <begin position="603"/>
        <end position="617"/>
    </location>
</feature>
<feature type="compositionally biased region" description="Acidic residues" evidence="2">
    <location>
        <begin position="624"/>
        <end position="633"/>
    </location>
</feature>
<feature type="modified residue" description="Phosphothreonine; by autocatalysis" evidence="1">
    <location>
        <position position="198"/>
    </location>
</feature>
<dbReference type="EMBL" id="CP000230">
    <property type="protein sequence ID" value="ABC24349.1"/>
    <property type="molecule type" value="Genomic_DNA"/>
</dbReference>
<dbReference type="RefSeq" id="WP_011391302.1">
    <property type="nucleotide sequence ID" value="NC_007643.1"/>
</dbReference>
<dbReference type="RefSeq" id="YP_428636.1">
    <property type="nucleotide sequence ID" value="NC_007643.1"/>
</dbReference>
<dbReference type="SMR" id="Q2RNE6"/>
<dbReference type="STRING" id="269796.Rru_A3555"/>
<dbReference type="EnsemblBacteria" id="ABC24349">
    <property type="protein sequence ID" value="ABC24349"/>
    <property type="gene ID" value="Rru_A3555"/>
</dbReference>
<dbReference type="KEGG" id="rru:Rru_A3555"/>
<dbReference type="PATRIC" id="fig|269796.9.peg.3674"/>
<dbReference type="eggNOG" id="COG0443">
    <property type="taxonomic scope" value="Bacteria"/>
</dbReference>
<dbReference type="HOGENOM" id="CLU_005965_2_1_5"/>
<dbReference type="PhylomeDB" id="Q2RNE6"/>
<dbReference type="Proteomes" id="UP000001929">
    <property type="component" value="Chromosome"/>
</dbReference>
<dbReference type="GO" id="GO:0005524">
    <property type="term" value="F:ATP binding"/>
    <property type="evidence" value="ECO:0007669"/>
    <property type="project" value="UniProtKB-UniRule"/>
</dbReference>
<dbReference type="GO" id="GO:0140662">
    <property type="term" value="F:ATP-dependent protein folding chaperone"/>
    <property type="evidence" value="ECO:0007669"/>
    <property type="project" value="InterPro"/>
</dbReference>
<dbReference type="GO" id="GO:0051082">
    <property type="term" value="F:unfolded protein binding"/>
    <property type="evidence" value="ECO:0007669"/>
    <property type="project" value="InterPro"/>
</dbReference>
<dbReference type="CDD" id="cd11733">
    <property type="entry name" value="ASKHA_NBD_HSP70_HSPA9"/>
    <property type="match status" value="1"/>
</dbReference>
<dbReference type="FunFam" id="2.60.34.10:FF:000014">
    <property type="entry name" value="Chaperone protein DnaK HSP70"/>
    <property type="match status" value="1"/>
</dbReference>
<dbReference type="FunFam" id="1.20.1270.10:FF:000001">
    <property type="entry name" value="Molecular chaperone DnaK"/>
    <property type="match status" value="1"/>
</dbReference>
<dbReference type="FunFam" id="3.30.420.40:FF:000004">
    <property type="entry name" value="Molecular chaperone DnaK"/>
    <property type="match status" value="1"/>
</dbReference>
<dbReference type="FunFam" id="3.90.640.10:FF:000003">
    <property type="entry name" value="Molecular chaperone DnaK"/>
    <property type="match status" value="1"/>
</dbReference>
<dbReference type="Gene3D" id="1.20.1270.10">
    <property type="match status" value="1"/>
</dbReference>
<dbReference type="Gene3D" id="3.30.420.40">
    <property type="match status" value="2"/>
</dbReference>
<dbReference type="Gene3D" id="3.90.640.10">
    <property type="entry name" value="Actin, Chain A, domain 4"/>
    <property type="match status" value="1"/>
</dbReference>
<dbReference type="Gene3D" id="2.60.34.10">
    <property type="entry name" value="Substrate Binding Domain Of DNAk, Chain A, domain 1"/>
    <property type="match status" value="1"/>
</dbReference>
<dbReference type="HAMAP" id="MF_00332">
    <property type="entry name" value="DnaK"/>
    <property type="match status" value="1"/>
</dbReference>
<dbReference type="InterPro" id="IPR043129">
    <property type="entry name" value="ATPase_NBD"/>
</dbReference>
<dbReference type="InterPro" id="IPR012725">
    <property type="entry name" value="Chaperone_DnaK"/>
</dbReference>
<dbReference type="InterPro" id="IPR018181">
    <property type="entry name" value="Heat_shock_70_CS"/>
</dbReference>
<dbReference type="InterPro" id="IPR029048">
    <property type="entry name" value="HSP70_C_sf"/>
</dbReference>
<dbReference type="InterPro" id="IPR029047">
    <property type="entry name" value="HSP70_peptide-bd_sf"/>
</dbReference>
<dbReference type="InterPro" id="IPR013126">
    <property type="entry name" value="Hsp_70_fam"/>
</dbReference>
<dbReference type="NCBIfam" id="NF001413">
    <property type="entry name" value="PRK00290.1"/>
    <property type="match status" value="1"/>
</dbReference>
<dbReference type="NCBIfam" id="NF003520">
    <property type="entry name" value="PRK05183.1"/>
    <property type="match status" value="1"/>
</dbReference>
<dbReference type="NCBIfam" id="TIGR02350">
    <property type="entry name" value="prok_dnaK"/>
    <property type="match status" value="1"/>
</dbReference>
<dbReference type="PANTHER" id="PTHR19375">
    <property type="entry name" value="HEAT SHOCK PROTEIN 70KDA"/>
    <property type="match status" value="1"/>
</dbReference>
<dbReference type="Pfam" id="PF00012">
    <property type="entry name" value="HSP70"/>
    <property type="match status" value="1"/>
</dbReference>
<dbReference type="PRINTS" id="PR00301">
    <property type="entry name" value="HEATSHOCK70"/>
</dbReference>
<dbReference type="SUPFAM" id="SSF53067">
    <property type="entry name" value="Actin-like ATPase domain"/>
    <property type="match status" value="2"/>
</dbReference>
<dbReference type="SUPFAM" id="SSF100934">
    <property type="entry name" value="Heat shock protein 70kD (HSP70), C-terminal subdomain"/>
    <property type="match status" value="1"/>
</dbReference>
<dbReference type="SUPFAM" id="SSF100920">
    <property type="entry name" value="Heat shock protein 70kD (HSP70), peptide-binding domain"/>
    <property type="match status" value="1"/>
</dbReference>
<dbReference type="PROSITE" id="PS00297">
    <property type="entry name" value="HSP70_1"/>
    <property type="match status" value="1"/>
</dbReference>
<dbReference type="PROSITE" id="PS00329">
    <property type="entry name" value="HSP70_2"/>
    <property type="match status" value="1"/>
</dbReference>
<dbReference type="PROSITE" id="PS01036">
    <property type="entry name" value="HSP70_3"/>
    <property type="match status" value="1"/>
</dbReference>
<gene>
    <name evidence="1" type="primary">dnaK</name>
    <name type="ordered locus">Rru_A3555</name>
</gene>
<organism>
    <name type="scientific">Rhodospirillum rubrum (strain ATCC 11170 / ATH 1.1.1 / DSM 467 / LMG 4362 / NCIMB 8255 / S1)</name>
    <dbReference type="NCBI Taxonomy" id="269796"/>
    <lineage>
        <taxon>Bacteria</taxon>
        <taxon>Pseudomonadati</taxon>
        <taxon>Pseudomonadota</taxon>
        <taxon>Alphaproteobacteria</taxon>
        <taxon>Rhodospirillales</taxon>
        <taxon>Rhodospirillaceae</taxon>
        <taxon>Rhodospirillum</taxon>
    </lineage>
</organism>
<comment type="function">
    <text evidence="1">Acts as a chaperone.</text>
</comment>
<comment type="induction">
    <text evidence="1">By stress conditions e.g. heat shock.</text>
</comment>
<comment type="similarity">
    <text evidence="1">Belongs to the heat shock protein 70 family.</text>
</comment>
<name>DNAK_RHORT</name>
<protein>
    <recommendedName>
        <fullName evidence="1">Chaperone protein DnaK</fullName>
    </recommendedName>
    <alternativeName>
        <fullName evidence="1">HSP70</fullName>
    </alternativeName>
    <alternativeName>
        <fullName evidence="1">Heat shock 70 kDa protein</fullName>
    </alternativeName>
    <alternativeName>
        <fullName evidence="1">Heat shock protein 70</fullName>
    </alternativeName>
</protein>
<evidence type="ECO:0000255" key="1">
    <source>
        <dbReference type="HAMAP-Rule" id="MF_00332"/>
    </source>
</evidence>
<evidence type="ECO:0000256" key="2">
    <source>
        <dbReference type="SAM" id="MobiDB-lite"/>
    </source>
</evidence>
<sequence>MSKVIGIDLGTTNSCVAVMDGKDVRVIENAEGARTTPSQVAFTESGERLVGQPAKRQAVTNPENTLFAIKRLIGRRYSDPTVEKDKGLVPYRIVKGDNGDAWVQTRDEKYAPSQLSAFILQKMKETAEAHLGEPVTQAVITVPAYFNDSQRQATKDAGKIAGLEVLRIINEPTAAALAYGMDKKNTGTIAVFDLGGGTFDVSVLEIGDGVFEVKSTNGDTFLGGEDFDARIIDYLASEFKKEQGIDLRTDRLALQRLKEAAEKAKIELSSSMQTEVNLPFITADQAGPKHLNIKLTRAKLEALVDDLVQRTVEPCRKALADAGIKASEIDEVILVGGMTRMPKVQQVVKDFFGREPHKGVNPDEVVAMGAAIQGGVLKGDVKDVLLLDVTPLSLGIETLGGVFTRLIDRNTTIPTRKSQTFSTAEDSQTAVTIRVFQGEREMAADNKMLGQFDLVGLPSAPRGVPQIEVTFDIDANGIVNVSAKDKATGKEQAIRIQASGGLSDNDIERMVKEAELNAEADRKRKEAVEARNHADGLIHATEKNLKEYGDKIPAEDKAKVEGDLTALKAVLDSEDAESIKAKTDALMQSAMKLGEAAYSAGQSAEGAPHAAGAEASAQSRTDDGVVDADFEEVDEKKGH</sequence>
<accession>Q2RNE6</accession>
<proteinExistence type="inferred from homology"/>